<keyword id="KW-0051">Antiviral defense</keyword>
<keyword id="KW-0255">Endonuclease</keyword>
<keyword id="KW-0378">Hydrolase</keyword>
<keyword id="KW-0460">Magnesium</keyword>
<keyword id="KW-0479">Metal-binding</keyword>
<keyword id="KW-0540">Nuclease</keyword>
<keyword id="KW-1185">Reference proteome</keyword>
<dbReference type="EC" id="3.1.-.-" evidence="1"/>
<dbReference type="EMBL" id="AE006470">
    <property type="protein sequence ID" value="AAM72362.1"/>
    <property type="molecule type" value="Genomic_DNA"/>
</dbReference>
<dbReference type="RefSeq" id="NP_662020.1">
    <property type="nucleotide sequence ID" value="NC_002932.3"/>
</dbReference>
<dbReference type="RefSeq" id="WP_010932801.1">
    <property type="nucleotide sequence ID" value="NC_002932.3"/>
</dbReference>
<dbReference type="SMR" id="Q8KDC5"/>
<dbReference type="STRING" id="194439.CT1129"/>
<dbReference type="DNASU" id="1006875"/>
<dbReference type="EnsemblBacteria" id="AAM72362">
    <property type="protein sequence ID" value="AAM72362"/>
    <property type="gene ID" value="CT1129"/>
</dbReference>
<dbReference type="KEGG" id="cte:CT1129"/>
<dbReference type="PATRIC" id="fig|194439.7.peg.1028"/>
<dbReference type="eggNOG" id="COG1343">
    <property type="taxonomic scope" value="Bacteria"/>
</dbReference>
<dbReference type="HOGENOM" id="CLU_161124_3_1_10"/>
<dbReference type="OrthoDB" id="9798176at2"/>
<dbReference type="Proteomes" id="UP000001007">
    <property type="component" value="Chromosome"/>
</dbReference>
<dbReference type="GO" id="GO:0046872">
    <property type="term" value="F:metal ion binding"/>
    <property type="evidence" value="ECO:0007669"/>
    <property type="project" value="UniProtKB-UniRule"/>
</dbReference>
<dbReference type="GO" id="GO:0004521">
    <property type="term" value="F:RNA endonuclease activity"/>
    <property type="evidence" value="ECO:0007669"/>
    <property type="project" value="InterPro"/>
</dbReference>
<dbReference type="GO" id="GO:0051607">
    <property type="term" value="P:defense response to virus"/>
    <property type="evidence" value="ECO:0007669"/>
    <property type="project" value="UniProtKB-UniRule"/>
</dbReference>
<dbReference type="GO" id="GO:0043571">
    <property type="term" value="P:maintenance of CRISPR repeat elements"/>
    <property type="evidence" value="ECO:0007669"/>
    <property type="project" value="UniProtKB-UniRule"/>
</dbReference>
<dbReference type="CDD" id="cd09725">
    <property type="entry name" value="Cas2_I_II_III"/>
    <property type="match status" value="1"/>
</dbReference>
<dbReference type="Gene3D" id="3.30.70.240">
    <property type="match status" value="1"/>
</dbReference>
<dbReference type="HAMAP" id="MF_01471">
    <property type="entry name" value="Cas2"/>
    <property type="match status" value="1"/>
</dbReference>
<dbReference type="InterPro" id="IPR021127">
    <property type="entry name" value="CRISPR_associated_Cas2"/>
</dbReference>
<dbReference type="InterPro" id="IPR019199">
    <property type="entry name" value="Virulence_VapD/CRISPR_Cas2"/>
</dbReference>
<dbReference type="NCBIfam" id="TIGR01573">
    <property type="entry name" value="cas2"/>
    <property type="match status" value="1"/>
</dbReference>
<dbReference type="PANTHER" id="PTHR34405">
    <property type="entry name" value="CRISPR-ASSOCIATED ENDORIBONUCLEASE CAS2"/>
    <property type="match status" value="1"/>
</dbReference>
<dbReference type="PANTHER" id="PTHR34405:SF3">
    <property type="entry name" value="CRISPR-ASSOCIATED ENDORIBONUCLEASE CAS2 3"/>
    <property type="match status" value="1"/>
</dbReference>
<dbReference type="Pfam" id="PF09827">
    <property type="entry name" value="CRISPR_Cas2"/>
    <property type="match status" value="1"/>
</dbReference>
<dbReference type="PIRSF" id="PIRSF032582">
    <property type="entry name" value="Cas2"/>
    <property type="match status" value="1"/>
</dbReference>
<dbReference type="SUPFAM" id="SSF143430">
    <property type="entry name" value="TTP0101/SSO1404-like"/>
    <property type="match status" value="1"/>
</dbReference>
<sequence length="96" mass="11214">MLVLVTYDVNTETPAGRRRLRRIAKTCQNYGQRVQFSVFECNVDPAQWVKLRSKLLNEMDPKLDSLRFYFLGSNWQGRVEHEGAKEPRDLEGTLIL</sequence>
<gene>
    <name evidence="1" type="primary">cas2</name>
    <name type="ordered locus">CT1129</name>
</gene>
<protein>
    <recommendedName>
        <fullName evidence="1">CRISPR-associated endoribonuclease Cas2</fullName>
        <ecNumber evidence="1">3.1.-.-</ecNumber>
    </recommendedName>
</protein>
<comment type="function">
    <text evidence="1">CRISPR (clustered regularly interspaced short palindromic repeat), is an adaptive immune system that provides protection against mobile genetic elements (viruses, transposable elements and conjugative plasmids). CRISPR clusters contain sequences complementary to antecedent mobile elements and target invading nucleic acids. CRISPR clusters are transcribed and processed into CRISPR RNA (crRNA). Functions as a ssRNA-specific endoribonuclease. Involved in the integration of spacer DNA into the CRISPR cassette.</text>
</comment>
<comment type="cofactor">
    <cofactor evidence="1">
        <name>Mg(2+)</name>
        <dbReference type="ChEBI" id="CHEBI:18420"/>
    </cofactor>
</comment>
<comment type="subunit">
    <text evidence="1">Homodimer, forms a heterotetramer with a Cas1 homodimer.</text>
</comment>
<comment type="similarity">
    <text evidence="1">Belongs to the CRISPR-associated endoribonuclease Cas2 protein family.</text>
</comment>
<organism>
    <name type="scientific">Chlorobaculum tepidum (strain ATCC 49652 / DSM 12025 / NBRC 103806 / TLS)</name>
    <name type="common">Chlorobium tepidum</name>
    <dbReference type="NCBI Taxonomy" id="194439"/>
    <lineage>
        <taxon>Bacteria</taxon>
        <taxon>Pseudomonadati</taxon>
        <taxon>Chlorobiota</taxon>
        <taxon>Chlorobiia</taxon>
        <taxon>Chlorobiales</taxon>
        <taxon>Chlorobiaceae</taxon>
        <taxon>Chlorobaculum</taxon>
    </lineage>
</organism>
<feature type="chain" id="PRO_0000417705" description="CRISPR-associated endoribonuclease Cas2">
    <location>
        <begin position="1"/>
        <end position="96"/>
    </location>
</feature>
<feature type="binding site" evidence="1">
    <location>
        <position position="8"/>
    </location>
    <ligand>
        <name>Mg(2+)</name>
        <dbReference type="ChEBI" id="CHEBI:18420"/>
        <note>catalytic</note>
    </ligand>
</feature>
<evidence type="ECO:0000255" key="1">
    <source>
        <dbReference type="HAMAP-Rule" id="MF_01471"/>
    </source>
</evidence>
<reference key="1">
    <citation type="journal article" date="2002" name="Proc. Natl. Acad. Sci. U.S.A.">
        <title>The complete genome sequence of Chlorobium tepidum TLS, a photosynthetic, anaerobic, green-sulfur bacterium.</title>
        <authorList>
            <person name="Eisen J.A."/>
            <person name="Nelson K.E."/>
            <person name="Paulsen I.T."/>
            <person name="Heidelberg J.F."/>
            <person name="Wu M."/>
            <person name="Dodson R.J."/>
            <person name="DeBoy R.T."/>
            <person name="Gwinn M.L."/>
            <person name="Nelson W.C."/>
            <person name="Haft D.H."/>
            <person name="Hickey E.K."/>
            <person name="Peterson J.D."/>
            <person name="Durkin A.S."/>
            <person name="Kolonay J.F."/>
            <person name="Yang F."/>
            <person name="Holt I.E."/>
            <person name="Umayam L.A."/>
            <person name="Mason T.M."/>
            <person name="Brenner M."/>
            <person name="Shea T.P."/>
            <person name="Parksey D.S."/>
            <person name="Nierman W.C."/>
            <person name="Feldblyum T.V."/>
            <person name="Hansen C.L."/>
            <person name="Craven M.B."/>
            <person name="Radune D."/>
            <person name="Vamathevan J.J."/>
            <person name="Khouri H.M."/>
            <person name="White O."/>
            <person name="Gruber T.M."/>
            <person name="Ketchum K.A."/>
            <person name="Venter J.C."/>
            <person name="Tettelin H."/>
            <person name="Bryant D.A."/>
            <person name="Fraser C.M."/>
        </authorList>
    </citation>
    <scope>NUCLEOTIDE SEQUENCE [LARGE SCALE GENOMIC DNA]</scope>
    <source>
        <strain>ATCC 49652 / DSM 12025 / NBRC 103806 / TLS</strain>
    </source>
</reference>
<name>CAS2_CHLTE</name>
<proteinExistence type="inferred from homology"/>
<accession>Q8KDC5</accession>